<name>DER1_YEAST</name>
<sequence>MDAVILNLLGDIPLVTRLWTIGCLVLSGLTSLRIVDPGKVVYSYDLVFKKGQYGRLLYSIFDYGAFNWISMINIFVSANHLSTLENSFNLRRKFCWIIFLLLVILVKMTSIEQPAASLGVLLHENLVYYELKKNGNQMNVRFFGAIDVSPSIFPIYMNAVMYFVYKRSWLEIAMNFMPGHVIYYMDDIIGKIYGIDLCKSPYDWFRNTETP</sequence>
<protein>
    <recommendedName>
        <fullName>Degradation in the endoplasmic reticulum protein 1</fullName>
    </recommendedName>
</protein>
<comment type="function">
    <text evidence="3 4 5 6 7">Component of the endoplasmic reticulum-associated degradation (ERAD) pathway. Specifically required for the ERAD-L pathway which mediates the degradation of proteins with misfolded lumenal domains within the endoplasmic reticulum (ER). Facilitates retrotranslocation of misfolded proteins from the ER lumen through the ER membrane in conjunction with HRD1 (PubMed:32327568). Both proteins have lateral gates facing each other and distort the membrane region between the lateral gates, making it much thinner than a normal phospholipid bilayer (PubMed:32327568). Substrates insert into the membrane as a hairpin loop with one strand interacting with DER1 and the other with HRD1 (PubMed:32327568).</text>
</comment>
<comment type="subunit">
    <text evidence="3 4 6">Component of the HRD1 ubiquitin ligase complex which contains the E3 ligase HRD1, its cofactors HRD3, USA1 and DER1, substrate recruiting factor YOS9 and CDC48-binding protein UBX2 (PubMed:16873066, PubMed:32327568). Within the complex, interacts with USA1 (via C-terminus) (PubMed:20005842, PubMed:32327568). In ERAD-L, HRD3 and YOS9 jointly bind misfolded glycoproteins in the endoplasmic reticulum (ER) lumen (PubMed:32327568). Movement of ERAD-L substrates through the ER membrane is facilitated by HRD1 and DER1 which have lateral gates facing each other and which distort the membrane region between the lateral gates, making it much thinner than a normal phospholipid bilayer (PubMed:32327568). Substrates insert into the membrane as a hairpin loop with one strand interacting with DER1 and the other with HRD1 (PubMed:32327568). The HRD1 complex interacts with the heterotrimeric CDC48-NPL4-UFD1 ATPase complex which is recruited by UBX2 via its interaction with CDC48 and which moves ubiquitinated substrates to the cytosol for targeting to the proteasome (PubMed:16873066).</text>
</comment>
<comment type="interaction">
    <interactant intactId="EBI-5761">
        <id>P38307</id>
    </interactant>
    <interactant intactId="EBI-4308">
        <id>P25694</id>
        <label>CDC48</label>
    </interactant>
    <organismsDiffer>false</organismsDiffer>
    <experiments>5</experiments>
</comment>
<comment type="interaction">
    <interactant intactId="EBI-5761">
        <id>P38307</id>
    </interactant>
    <interactant intactId="EBI-37613">
        <id>Q08109</id>
        <label>HRD1</label>
    </interactant>
    <organismsDiffer>false</organismsDiffer>
    <experiments>5</experiments>
</comment>
<comment type="interaction">
    <interactant intactId="EBI-5761">
        <id>P38307</id>
    </interactant>
    <interactant intactId="EBI-31647">
        <id>Q05787</id>
        <label>HRD3</label>
    </interactant>
    <organismsDiffer>false</organismsDiffer>
    <experiments>3</experiments>
</comment>
<comment type="interaction">
    <interactant intactId="EBI-5761">
        <id>P38307</id>
    </interactant>
    <interactant intactId="EBI-4153">
        <id>P00729</id>
        <label>PRC1</label>
    </interactant>
    <organismsDiffer>false</organismsDiffer>
    <experiments>2</experiments>
</comment>
<comment type="interaction">
    <interactant intactId="EBI-5761">
        <id>P38307</id>
    </interactant>
    <interactant intactId="EBI-19997">
        <id>P53044</id>
        <label>UFD1</label>
    </interactant>
    <organismsDiffer>false</organismsDiffer>
    <experiments>3</experiments>
</comment>
<comment type="interaction">
    <interactant intactId="EBI-5761">
        <id>P38307</id>
    </interactant>
    <interactant intactId="EBI-27760">
        <id>Q03714</id>
        <label>USA1</label>
    </interactant>
    <organismsDiffer>false</organismsDiffer>
    <experiments>3</experiments>
</comment>
<comment type="subcellular location">
    <subcellularLocation>
        <location evidence="7">Endoplasmic reticulum membrane</location>
        <topology evidence="7">Multi-pass membrane protein</topology>
    </subcellularLocation>
</comment>
<comment type="induction">
    <text evidence="1">Up-regulated by the unfolded protein response (UPR).</text>
</comment>
<comment type="PTM">
    <text evidence="5">N-terminally acetylated by acetyltransferase NatB which enhances DER1 stability and is required for ERAD-L function.</text>
</comment>
<comment type="disruption phenotype">
    <text evidence="3 4 5">Impaired degradation of proteins with misfolded lumenal domains such as CPY*, a mutant, misfolded form of carboxypeptidase Y which is a known ERAD-L substrate. Degradation of proteins with misfolded intramembrane domains is not affected.</text>
</comment>
<comment type="miscellaneous">
    <text evidence="2">Present with 238 molecules/cell in log phase SD medium.</text>
</comment>
<comment type="similarity">
    <text evidence="8">Belongs to the derlin family.</text>
</comment>
<comment type="sequence caution" evidence="8">
    <conflict type="frameshift">
        <sequence resource="EMBL-CDS" id="CAA79688"/>
    </conflict>
</comment>
<feature type="chain" id="PRO_0000219053" description="Degradation in the endoplasmic reticulum protein 1">
    <location>
        <begin position="1"/>
        <end position="211"/>
    </location>
</feature>
<feature type="topological domain" description="Cytoplasmic" evidence="6">
    <location>
        <begin position="1"/>
        <end position="14"/>
    </location>
</feature>
<feature type="transmembrane region" description="Helical; Name=1" evidence="6">
    <location>
        <begin position="15"/>
        <end position="32"/>
    </location>
</feature>
<feature type="topological domain" description="Lumenal" evidence="6">
    <location>
        <begin position="33"/>
        <end position="67"/>
    </location>
</feature>
<feature type="transmembrane region" description="Helical; Name=2" evidence="6">
    <location>
        <begin position="68"/>
        <end position="85"/>
    </location>
</feature>
<feature type="topological domain" description="Cytoplasmic" evidence="6">
    <location>
        <begin position="86"/>
        <end position="92"/>
    </location>
</feature>
<feature type="transmembrane region" description="Helical; Name=3" evidence="6">
    <location>
        <begin position="93"/>
        <end position="109"/>
    </location>
</feature>
<feature type="topological domain" description="Lumenal" evidence="6">
    <location>
        <begin position="110"/>
        <end position="117"/>
    </location>
</feature>
<feature type="transmembrane region" description="Helical; Name=4" evidence="6">
    <location>
        <begin position="118"/>
        <end position="133"/>
    </location>
</feature>
<feature type="topological domain" description="Cytoplasmic" evidence="6">
    <location>
        <begin position="134"/>
        <end position="149"/>
    </location>
</feature>
<feature type="transmembrane region" description="Helical; Name=5" evidence="6">
    <location>
        <begin position="150"/>
        <end position="165"/>
    </location>
</feature>
<feature type="topological domain" description="Lumenal" evidence="6">
    <location>
        <begin position="166"/>
        <end position="168"/>
    </location>
</feature>
<feature type="transmembrane region" description="Helical; Name=6" evidence="6">
    <location>
        <begin position="169"/>
        <end position="189"/>
    </location>
</feature>
<feature type="topological domain" description="Cytoplasmic" evidence="6">
    <location>
        <begin position="190"/>
        <end position="211"/>
    </location>
</feature>
<feature type="modified residue" description="N-acetylmethionine" evidence="5">
    <location>
        <position position="1"/>
    </location>
</feature>
<feature type="mutagenesis site" description="Cleavage of initiator methionine, acetylation of Ala-2 by NatA, slightly reduced acetylation levels but no significant effect on endogenous stability or ability to degrade CPY*." evidence="5">
    <original>D</original>
    <variation>A</variation>
    <location>
        <position position="2"/>
    </location>
</feature>
<feature type="mutagenesis site" description="No effect on ability to degrade CPY*." evidence="5">
    <original>D</original>
    <variation>E</variation>
    <location>
        <position position="2"/>
    </location>
</feature>
<feature type="mutagenesis site" description="N-terminus not predicted to be acetylated. Strongly decreases endogenous stability." evidence="5">
    <original>D</original>
    <variation>K</variation>
    <location>
        <position position="2"/>
    </location>
</feature>
<feature type="mutagenesis site" description="Predicted to lead to acetylation by NatC. No effect on endogenous stability or ability to degrade CPY*." evidence="5">
    <original>D</original>
    <variation>L</variation>
    <location>
        <position position="2"/>
    </location>
</feature>
<feature type="mutagenesis site" description="In der1-2; impairs the ability to degrade misfolded proteins.">
    <original>S</original>
    <variation>L</variation>
    <location>
        <position position="59"/>
    </location>
</feature>
<feature type="mutagenesis site" description="Reduced ERAD-L degradation rate." evidence="6">
    <original>NHLST</original>
    <variation>LHLLV</variation>
    <location>
        <begin position="79"/>
        <end position="83"/>
    </location>
</feature>
<feature type="mutagenesis site" description="No effect on ERAD-L degradation rate." evidence="6">
    <original>NHLST</original>
    <variation>SHLKN</variation>
    <location>
        <begin position="79"/>
        <end position="83"/>
    </location>
</feature>
<feature type="sequence conflict" description="In Ref. 1; CAA63165." evidence="8" ref="1">
    <original>A</original>
    <variation>V</variation>
    <location>
        <position position="145"/>
    </location>
</feature>
<gene>
    <name type="primary">DER1</name>
    <name type="ordered locus">YBR201W</name>
    <name type="ORF">YBR1413</name>
</gene>
<organism>
    <name type="scientific">Saccharomyces cerevisiae (strain ATCC 204508 / S288c)</name>
    <name type="common">Baker's yeast</name>
    <dbReference type="NCBI Taxonomy" id="559292"/>
    <lineage>
        <taxon>Eukaryota</taxon>
        <taxon>Fungi</taxon>
        <taxon>Dikarya</taxon>
        <taxon>Ascomycota</taxon>
        <taxon>Saccharomycotina</taxon>
        <taxon>Saccharomycetes</taxon>
        <taxon>Saccharomycetales</taxon>
        <taxon>Saccharomycetaceae</taxon>
        <taxon>Saccharomyces</taxon>
    </lineage>
</organism>
<reference key="1">
    <citation type="journal article" date="1996" name="EMBO J.">
        <title>Der1, a novel protein specifically required for endoplasmic reticulum degradation in yeast.</title>
        <authorList>
            <person name="Knop M."/>
            <person name="Finger A."/>
            <person name="Braun T."/>
            <person name="Hellmuth K."/>
            <person name="Wolf D.H."/>
        </authorList>
    </citation>
    <scope>NUCLEOTIDE SEQUENCE [GENOMIC DNA]</scope>
    <scope>FUNCTION</scope>
    <scope>SUBCELLULAR LOCATION</scope>
</reference>
<reference key="2">
    <citation type="journal article" date="1994" name="Yeast">
        <title>Nucleotide sequence analysis of an 11.7 kb fragment of yeast chromosome II including BEM1, a new gene of the WD-40 repeat family and a new member of the KRE2/MNT1 family.</title>
        <authorList>
            <person name="Mallet L."/>
            <person name="Bussereau F."/>
            <person name="Jacquet M."/>
        </authorList>
    </citation>
    <scope>NUCLEOTIDE SEQUENCE [GENOMIC DNA]</scope>
    <source>
        <strain>ATCC 204508 / S288c</strain>
    </source>
</reference>
<reference key="3">
    <citation type="journal article" date="1994" name="EMBO J.">
        <title>Complete DNA sequence of yeast chromosome II.</title>
        <authorList>
            <person name="Feldmann H."/>
            <person name="Aigle M."/>
            <person name="Aljinovic G."/>
            <person name="Andre B."/>
            <person name="Baclet M.C."/>
            <person name="Barthe C."/>
            <person name="Baur A."/>
            <person name="Becam A.-M."/>
            <person name="Biteau N."/>
            <person name="Boles E."/>
            <person name="Brandt T."/>
            <person name="Brendel M."/>
            <person name="Brueckner M."/>
            <person name="Bussereau F."/>
            <person name="Christiansen C."/>
            <person name="Contreras R."/>
            <person name="Crouzet M."/>
            <person name="Cziepluch C."/>
            <person name="Demolis N."/>
            <person name="Delaveau T."/>
            <person name="Doignon F."/>
            <person name="Domdey H."/>
            <person name="Duesterhus S."/>
            <person name="Dubois E."/>
            <person name="Dujon B."/>
            <person name="El Bakkoury M."/>
            <person name="Entian K.-D."/>
            <person name="Feuermann M."/>
            <person name="Fiers W."/>
            <person name="Fobo G.M."/>
            <person name="Fritz C."/>
            <person name="Gassenhuber J."/>
            <person name="Glansdorff N."/>
            <person name="Goffeau A."/>
            <person name="Grivell L.A."/>
            <person name="de Haan M."/>
            <person name="Hein C."/>
            <person name="Herbert C.J."/>
            <person name="Hollenberg C.P."/>
            <person name="Holmstroem K."/>
            <person name="Jacq C."/>
            <person name="Jacquet M."/>
            <person name="Jauniaux J.-C."/>
            <person name="Jonniaux J.-L."/>
            <person name="Kallesoee T."/>
            <person name="Kiesau P."/>
            <person name="Kirchrath L."/>
            <person name="Koetter P."/>
            <person name="Korol S."/>
            <person name="Liebl S."/>
            <person name="Logghe M."/>
            <person name="Lohan A.J.E."/>
            <person name="Louis E.J."/>
            <person name="Li Z.Y."/>
            <person name="Maat M.J."/>
            <person name="Mallet L."/>
            <person name="Mannhaupt G."/>
            <person name="Messenguy F."/>
            <person name="Miosga T."/>
            <person name="Molemans F."/>
            <person name="Mueller S."/>
            <person name="Nasr F."/>
            <person name="Obermaier B."/>
            <person name="Perea J."/>
            <person name="Pierard A."/>
            <person name="Piravandi E."/>
            <person name="Pohl F.M."/>
            <person name="Pohl T.M."/>
            <person name="Potier S."/>
            <person name="Proft M."/>
            <person name="Purnelle B."/>
            <person name="Ramezani Rad M."/>
            <person name="Rieger M."/>
            <person name="Rose M."/>
            <person name="Schaaff-Gerstenschlaeger I."/>
            <person name="Scherens B."/>
            <person name="Schwarzlose C."/>
            <person name="Skala J."/>
            <person name="Slonimski P.P."/>
            <person name="Smits P.H.M."/>
            <person name="Souciet J.-L."/>
            <person name="Steensma H.Y."/>
            <person name="Stucka R."/>
            <person name="Urrestarazu L.A."/>
            <person name="van der Aart Q.J.M."/>
            <person name="Van Dyck L."/>
            <person name="Vassarotti A."/>
            <person name="Vetter I."/>
            <person name="Vierendeels F."/>
            <person name="Vissers S."/>
            <person name="Wagner G."/>
            <person name="de Wergifosse P."/>
            <person name="Wolfe K.H."/>
            <person name="Zagulski M."/>
            <person name="Zimmermann F.K."/>
            <person name="Mewes H.-W."/>
            <person name="Kleine K."/>
        </authorList>
    </citation>
    <scope>NUCLEOTIDE SEQUENCE [LARGE SCALE GENOMIC DNA]</scope>
    <source>
        <strain>ATCC 204508 / S288c</strain>
    </source>
</reference>
<reference key="4">
    <citation type="journal article" date="2014" name="G3 (Bethesda)">
        <title>The reference genome sequence of Saccharomyces cerevisiae: Then and now.</title>
        <authorList>
            <person name="Engel S.R."/>
            <person name="Dietrich F.S."/>
            <person name="Fisk D.G."/>
            <person name="Binkley G."/>
            <person name="Balakrishnan R."/>
            <person name="Costanzo M.C."/>
            <person name="Dwight S.S."/>
            <person name="Hitz B.C."/>
            <person name="Karra K."/>
            <person name="Nash R.S."/>
            <person name="Weng S."/>
            <person name="Wong E.D."/>
            <person name="Lloyd P."/>
            <person name="Skrzypek M.S."/>
            <person name="Miyasato S.R."/>
            <person name="Simison M."/>
            <person name="Cherry J.M."/>
        </authorList>
    </citation>
    <scope>GENOME REANNOTATION</scope>
    <source>
        <strain>ATCC 204508 / S288c</strain>
    </source>
</reference>
<reference key="5">
    <citation type="journal article" date="2000" name="Cell">
        <title>Functional and genomic analyses reveal an essential coordination between the unfolded protein response and ER-associated degradation.</title>
        <authorList>
            <person name="Travers K.J."/>
            <person name="Patil C.K."/>
            <person name="Wodicka L."/>
            <person name="Lockhart D.J."/>
            <person name="Weissman J.S."/>
            <person name="Walter P."/>
        </authorList>
    </citation>
    <scope>INDUCTION</scope>
</reference>
<reference key="6">
    <citation type="journal article" date="2003" name="Nature">
        <title>Global analysis of protein expression in yeast.</title>
        <authorList>
            <person name="Ghaemmaghami S."/>
            <person name="Huh W.-K."/>
            <person name="Bower K."/>
            <person name="Howson R.W."/>
            <person name="Belle A."/>
            <person name="Dephoure N."/>
            <person name="O'Shea E.K."/>
            <person name="Weissman J.S."/>
        </authorList>
    </citation>
    <scope>LEVEL OF PROTEIN EXPRESSION [LARGE SCALE ANALYSIS]</scope>
</reference>
<reference key="7">
    <citation type="journal article" date="2004" name="FEMS Yeast Res.">
        <title>Der1p, a protein required for degradation of malfolded soluble proteins of the endoplasmic reticulum: topology and Der1-like proteins.</title>
        <authorList>
            <person name="Hitt R."/>
            <person name="Wolf D.H."/>
        </authorList>
    </citation>
    <scope>MEMBRANE TOPOLOGY</scope>
    <scope>MUTANT DER1-2</scope>
</reference>
<reference key="8">
    <citation type="journal article" date="2006" name="Cell">
        <title>Distinct ubiquitin-ligase complexes define convergent pathways for the degradation of ER proteins.</title>
        <authorList>
            <person name="Carvalho P."/>
            <person name="Goder V."/>
            <person name="Rapoport T.A."/>
        </authorList>
    </citation>
    <scope>FUNCTION</scope>
    <scope>IDENTIFICATION IN THE HRD1 COMPLEX</scope>
    <scope>DISRUPTION PHENOTYPE</scope>
</reference>
<reference key="9">
    <citation type="journal article" date="2006" name="Proc. Natl. Acad. Sci. U.S.A.">
        <title>A global topology map of the Saccharomyces cerevisiae membrane proteome.</title>
        <authorList>
            <person name="Kim H."/>
            <person name="Melen K."/>
            <person name="Oesterberg M."/>
            <person name="von Heijne G."/>
        </authorList>
    </citation>
    <scope>TOPOLOGY [LARGE SCALE ANALYSIS]</scope>
    <source>
        <strain>ATCC 208353 / W303-1A</strain>
    </source>
</reference>
<reference key="10">
    <citation type="journal article" date="2009" name="Mol. Cell">
        <title>Usa1 functions as a scaffold of the HRD-ubiquitin ligase.</title>
        <authorList>
            <person name="Horn S.C."/>
            <person name="Hanna J."/>
            <person name="Hirsch C."/>
            <person name="Volkwein C."/>
            <person name="Schutz A."/>
            <person name="Heinemann U."/>
            <person name="Sommer T."/>
            <person name="Jarosch E."/>
        </authorList>
    </citation>
    <scope>FUNCTION</scope>
    <scope>DISRUPTION PHENOTYPE</scope>
    <scope>INTERACTION WITH USA1</scope>
</reference>
<reference key="11">
    <citation type="journal article" date="2013" name="Mol. Biol. Cell">
        <title>N-terminal acetylation of the yeast Derlin Der1 is essential for Hrd1 ubiquitin-ligase activity toward luminal ER substrates.</title>
        <authorList>
            <person name="Zattas D."/>
            <person name="Adle D.J."/>
            <person name="Rubenstein E.M."/>
            <person name="Hochstrasser M."/>
        </authorList>
    </citation>
    <scope>FUNCTION</scope>
    <scope>DISRUPTION PHENOTYPE</scope>
    <scope>ACETYLATION AT MET-1</scope>
    <scope>MUTAGENESIS OF ASP-2</scope>
</reference>
<reference evidence="9 10" key="12">
    <citation type="journal article" date="2020" name="Science">
        <title>Structural basis of ER-associated protein degradation mediated by the Hrd1 ubiquitin ligase complex.</title>
        <authorList>
            <person name="Wu X."/>
            <person name="Siggel M."/>
            <person name="Ovchinnikov S."/>
            <person name="Mi W."/>
            <person name="Svetlov V."/>
            <person name="Nudler E."/>
            <person name="Liao M."/>
            <person name="Hummer G."/>
            <person name="Rapoport T.A."/>
        </authorList>
    </citation>
    <scope>STRUCTURE BY ELECTRON MICROSCOPY (4.10 ANGSTROMS) IN COMPLEX WITH HRD1; HRD3 AND USA1</scope>
    <scope>FUNCTION</scope>
    <scope>SUBUNIT</scope>
    <scope>INTERACTION WITH USA1</scope>
    <scope>TRANSMEMBRANE DOMAINS</scope>
    <scope>MUTAGENESIS OF 79-ASN--THR-83</scope>
</reference>
<proteinExistence type="evidence at protein level"/>
<dbReference type="EMBL" id="X92435">
    <property type="protein sequence ID" value="CAA63165.1"/>
    <property type="molecule type" value="Genomic_DNA"/>
</dbReference>
<dbReference type="EMBL" id="Z21487">
    <property type="protein sequence ID" value="CAA79688.1"/>
    <property type="status" value="ALT_FRAME"/>
    <property type="molecule type" value="Genomic_DNA"/>
</dbReference>
<dbReference type="EMBL" id="Z36069">
    <property type="protein sequence ID" value="CAA85164.1"/>
    <property type="molecule type" value="Genomic_DNA"/>
</dbReference>
<dbReference type="EMBL" id="Z36070">
    <property type="protein sequence ID" value="CAA85165.1"/>
    <property type="molecule type" value="Genomic_DNA"/>
</dbReference>
<dbReference type="EMBL" id="BK006936">
    <property type="protein sequence ID" value="DAA07318.1"/>
    <property type="molecule type" value="Genomic_DNA"/>
</dbReference>
<dbReference type="PIR" id="S45450">
    <property type="entry name" value="S45450"/>
</dbReference>
<dbReference type="RefSeq" id="NP_009760.1">
    <property type="nucleotide sequence ID" value="NM_001178549.1"/>
</dbReference>
<dbReference type="PDB" id="6VJZ">
    <property type="method" value="EM"/>
    <property type="resolution" value="4.30 A"/>
    <property type="chains" value="C=1-211"/>
</dbReference>
<dbReference type="PDB" id="6VK0">
    <property type="method" value="EM"/>
    <property type="resolution" value="4.10 A"/>
    <property type="chains" value="C=1-211"/>
</dbReference>
<dbReference type="PDBsum" id="6VJZ"/>
<dbReference type="PDBsum" id="6VK0"/>
<dbReference type="EMDB" id="EMD-21221"/>
<dbReference type="EMDB" id="EMD-21222"/>
<dbReference type="SMR" id="P38307"/>
<dbReference type="BioGRID" id="32898">
    <property type="interactions" value="254"/>
</dbReference>
<dbReference type="ComplexPortal" id="CPX-3070">
    <property type="entry name" value="HRD1 E3 ubiquitin ligase complex"/>
</dbReference>
<dbReference type="DIP" id="DIP-4767N"/>
<dbReference type="FunCoup" id="P38307">
    <property type="interactions" value="126"/>
</dbReference>
<dbReference type="IntAct" id="P38307">
    <property type="interactions" value="9"/>
</dbReference>
<dbReference type="MINT" id="P38307"/>
<dbReference type="STRING" id="4932.YBR201W"/>
<dbReference type="TCDB" id="3.A.16.1.2">
    <property type="family name" value="the endoplasmic reticular retrotranslocon (er-rt) family"/>
</dbReference>
<dbReference type="iPTMnet" id="P38307"/>
<dbReference type="PaxDb" id="4932-YBR201W"/>
<dbReference type="PeptideAtlas" id="P38307"/>
<dbReference type="EnsemblFungi" id="YBR201W_mRNA">
    <property type="protein sequence ID" value="YBR201W"/>
    <property type="gene ID" value="YBR201W"/>
</dbReference>
<dbReference type="GeneID" id="852500"/>
<dbReference type="KEGG" id="sce:YBR201W"/>
<dbReference type="AGR" id="SGD:S000000405"/>
<dbReference type="SGD" id="S000000405">
    <property type="gene designation" value="DER1"/>
</dbReference>
<dbReference type="VEuPathDB" id="FungiDB:YBR201W"/>
<dbReference type="eggNOG" id="KOG0858">
    <property type="taxonomic scope" value="Eukaryota"/>
</dbReference>
<dbReference type="HOGENOM" id="CLU_1256224_0_0_1"/>
<dbReference type="InParanoid" id="P38307"/>
<dbReference type="OMA" id="FKKGQYE"/>
<dbReference type="OrthoDB" id="1716531at2759"/>
<dbReference type="BioCyc" id="YEAST:G3O-29142-MONOMER"/>
<dbReference type="BioGRID-ORCS" id="852500">
    <property type="hits" value="0 hits in 10 CRISPR screens"/>
</dbReference>
<dbReference type="PRO" id="PR:P38307"/>
<dbReference type="Proteomes" id="UP000002311">
    <property type="component" value="Chromosome II"/>
</dbReference>
<dbReference type="RNAct" id="P38307">
    <property type="molecule type" value="protein"/>
</dbReference>
<dbReference type="GO" id="GO:0005789">
    <property type="term" value="C:endoplasmic reticulum membrane"/>
    <property type="evidence" value="ECO:0000314"/>
    <property type="project" value="SGD"/>
</dbReference>
<dbReference type="GO" id="GO:0000836">
    <property type="term" value="C:Hrd1p ubiquitin ligase complex"/>
    <property type="evidence" value="ECO:0000353"/>
    <property type="project" value="ComplexPortal"/>
</dbReference>
<dbReference type="GO" id="GO:0000839">
    <property type="term" value="C:Hrd1p ubiquitin ligase ERAD-L complex"/>
    <property type="evidence" value="ECO:0000314"/>
    <property type="project" value="SGD"/>
</dbReference>
<dbReference type="GO" id="GO:0051787">
    <property type="term" value="F:misfolded protein binding"/>
    <property type="evidence" value="ECO:0000314"/>
    <property type="project" value="SGD"/>
</dbReference>
<dbReference type="GO" id="GO:0005047">
    <property type="term" value="F:signal recognition particle binding"/>
    <property type="evidence" value="ECO:0000318"/>
    <property type="project" value="GO_Central"/>
</dbReference>
<dbReference type="GO" id="GO:0030968">
    <property type="term" value="P:endoplasmic reticulum unfolded protein response"/>
    <property type="evidence" value="ECO:0000318"/>
    <property type="project" value="GO_Central"/>
</dbReference>
<dbReference type="GO" id="GO:0036503">
    <property type="term" value="P:ERAD pathway"/>
    <property type="evidence" value="ECO:0000315"/>
    <property type="project" value="SGD"/>
</dbReference>
<dbReference type="GO" id="GO:0070843">
    <property type="term" value="P:misfolded protein transport"/>
    <property type="evidence" value="ECO:0000315"/>
    <property type="project" value="SGD"/>
</dbReference>
<dbReference type="GO" id="GO:0006515">
    <property type="term" value="P:protein quality control for misfolded or incompletely synthesized proteins"/>
    <property type="evidence" value="ECO:0000315"/>
    <property type="project" value="UniProtKB"/>
</dbReference>
<dbReference type="GO" id="GO:0030970">
    <property type="term" value="P:retrograde protein transport, ER to cytosol"/>
    <property type="evidence" value="ECO:0000315"/>
    <property type="project" value="SGD"/>
</dbReference>
<dbReference type="InterPro" id="IPR007599">
    <property type="entry name" value="DER1"/>
</dbReference>
<dbReference type="PANTHER" id="PTHR11009">
    <property type="entry name" value="DER1-LIKE PROTEIN, DERLIN"/>
    <property type="match status" value="1"/>
</dbReference>
<dbReference type="Pfam" id="PF04511">
    <property type="entry name" value="DER1"/>
    <property type="match status" value="1"/>
</dbReference>
<accession>P38307</accession>
<accession>D6VQJ8</accession>
<keyword id="KW-0002">3D-structure</keyword>
<keyword id="KW-0007">Acetylation</keyword>
<keyword id="KW-0256">Endoplasmic reticulum</keyword>
<keyword id="KW-0472">Membrane</keyword>
<keyword id="KW-0653">Protein transport</keyword>
<keyword id="KW-1185">Reference proteome</keyword>
<keyword id="KW-0812">Transmembrane</keyword>
<keyword id="KW-1133">Transmembrane helix</keyword>
<keyword id="KW-0813">Transport</keyword>
<evidence type="ECO:0000269" key="1">
    <source>
    </source>
</evidence>
<evidence type="ECO:0000269" key="2">
    <source>
    </source>
</evidence>
<evidence type="ECO:0000269" key="3">
    <source>
    </source>
</evidence>
<evidence type="ECO:0000269" key="4">
    <source>
    </source>
</evidence>
<evidence type="ECO:0000269" key="5">
    <source>
    </source>
</evidence>
<evidence type="ECO:0000269" key="6">
    <source>
    </source>
</evidence>
<evidence type="ECO:0000269" key="7">
    <source>
    </source>
</evidence>
<evidence type="ECO:0000305" key="8"/>
<evidence type="ECO:0007744" key="9">
    <source>
        <dbReference type="PDB" id="6VJZ"/>
    </source>
</evidence>
<evidence type="ECO:0007744" key="10">
    <source>
        <dbReference type="PDB" id="6VK0"/>
    </source>
</evidence>